<reference key="1">
    <citation type="journal article" date="1992" name="Nucleic Acids Res.">
        <title>Momordin II, a ribosome inactivating protein from Momordica balsamina, is homologous to other plant proteins.</title>
        <authorList>
            <person name="Ortigao M."/>
            <person name="Better M."/>
        </authorList>
    </citation>
    <scope>NUCLEOTIDE SEQUENCE [GENOMIC DNA]</scope>
    <source>
        <tissue>Seed</tissue>
    </source>
</reference>
<sequence>MVKCLLLSFLIIAIFIGVPTAKGDVNFDLSTATAKTYTKFIEDFRATLPFSHKVYDIPLLYSTISDSRRFILLDLTSYAYETISVAIDVTNVYVVAYRTRDVSYFFKESPPEAYNILFKGTRKITLPYTGNYENLQTAAHKIRENIDLGLPALSSAITTLFYYNAQSAPSALLVLIQTTAEAARFKYIERHVAKYVATNFKPNLAIISLENQWSALSKQIFLAQNQGGKFRNPVDLIKPTGERFQVTNVDSDVVKGNIKLLLNSRASTADENFITTMTLLGESVVN</sequence>
<organism>
    <name type="scientific">Momordica balsamina</name>
    <name type="common">Bitter gourd</name>
    <name type="synonym">Balsam apple</name>
    <dbReference type="NCBI Taxonomy" id="3672"/>
    <lineage>
        <taxon>Eukaryota</taxon>
        <taxon>Viridiplantae</taxon>
        <taxon>Streptophyta</taxon>
        <taxon>Embryophyta</taxon>
        <taxon>Tracheophyta</taxon>
        <taxon>Spermatophyta</taxon>
        <taxon>Magnoliopsida</taxon>
        <taxon>eudicotyledons</taxon>
        <taxon>Gunneridae</taxon>
        <taxon>Pentapetalae</taxon>
        <taxon>rosids</taxon>
        <taxon>fabids</taxon>
        <taxon>Cucurbitales</taxon>
        <taxon>Cucurbitaceae</taxon>
        <taxon>Momordiceae</taxon>
        <taxon>Momordica</taxon>
    </lineage>
</organism>
<proteinExistence type="inferred from homology"/>
<comment type="catalytic activity">
    <reaction>
        <text>Endohydrolysis of the N-glycosidic bond at one specific adenosine on the 28S rRNA.</text>
        <dbReference type="EC" id="3.2.2.22"/>
    </reaction>
</comment>
<comment type="similarity">
    <text evidence="2">Belongs to the ribosome-inactivating protein family. Type 1 RIP subfamily.</text>
</comment>
<accession>P29339</accession>
<protein>
    <recommendedName>
        <fullName>Ribosome-inactivating protein momordin II</fullName>
        <ecNumber>3.2.2.22</ecNumber>
    </recommendedName>
    <alternativeName>
        <fullName>rRNA N-glycosidase</fullName>
    </alternativeName>
</protein>
<feature type="signal peptide">
    <location>
        <begin position="1"/>
        <end position="23"/>
    </location>
</feature>
<feature type="chain" id="PRO_0000030772" description="Ribosome-inactivating protein momordin II">
    <location>
        <begin position="24"/>
        <end position="286"/>
    </location>
</feature>
<feature type="active site" evidence="1">
    <location>
        <position position="181"/>
    </location>
</feature>
<evidence type="ECO:0000250" key="1"/>
<evidence type="ECO:0000305" key="2"/>
<keyword id="KW-0378">Hydrolase</keyword>
<keyword id="KW-0611">Plant defense</keyword>
<keyword id="KW-0652">Protein synthesis inhibitor</keyword>
<keyword id="KW-0732">Signal</keyword>
<keyword id="KW-0800">Toxin</keyword>
<dbReference type="EC" id="3.2.2.22"/>
<dbReference type="EMBL" id="Z12175">
    <property type="protein sequence ID" value="CAA78166.1"/>
    <property type="molecule type" value="Genomic_DNA"/>
</dbReference>
<dbReference type="PIR" id="S25560">
    <property type="entry name" value="S25560"/>
</dbReference>
<dbReference type="BMRB" id="P29339"/>
<dbReference type="SMR" id="P29339"/>
<dbReference type="GO" id="GO:0030598">
    <property type="term" value="F:rRNA N-glycosylase activity"/>
    <property type="evidence" value="ECO:0007669"/>
    <property type="project" value="UniProtKB-EC"/>
</dbReference>
<dbReference type="GO" id="GO:0090729">
    <property type="term" value="F:toxin activity"/>
    <property type="evidence" value="ECO:0007669"/>
    <property type="project" value="UniProtKB-KW"/>
</dbReference>
<dbReference type="GO" id="GO:0006952">
    <property type="term" value="P:defense response"/>
    <property type="evidence" value="ECO:0007669"/>
    <property type="project" value="UniProtKB-KW"/>
</dbReference>
<dbReference type="GO" id="GO:0017148">
    <property type="term" value="P:negative regulation of translation"/>
    <property type="evidence" value="ECO:0007669"/>
    <property type="project" value="UniProtKB-KW"/>
</dbReference>
<dbReference type="Gene3D" id="3.40.420.10">
    <property type="entry name" value="Ricin (A subunit), domain 1"/>
    <property type="match status" value="1"/>
</dbReference>
<dbReference type="Gene3D" id="4.10.470.10">
    <property type="entry name" value="Ricin (A Subunit), domain 2"/>
    <property type="match status" value="1"/>
</dbReference>
<dbReference type="InterPro" id="IPR036041">
    <property type="entry name" value="Ribosome-inact_prot_sf"/>
</dbReference>
<dbReference type="InterPro" id="IPR017989">
    <property type="entry name" value="Ribosome_inactivat_1/2"/>
</dbReference>
<dbReference type="InterPro" id="IPR001574">
    <property type="entry name" value="Ribosome_inactivat_prot"/>
</dbReference>
<dbReference type="InterPro" id="IPR017988">
    <property type="entry name" value="Ribosome_inactivat_prot_CS"/>
</dbReference>
<dbReference type="InterPro" id="IPR016138">
    <property type="entry name" value="Ribosome_inactivat_prot_sub1"/>
</dbReference>
<dbReference type="InterPro" id="IPR016139">
    <property type="entry name" value="Ribosome_inactivat_prot_sub2"/>
</dbReference>
<dbReference type="PANTHER" id="PTHR33453">
    <property type="match status" value="1"/>
</dbReference>
<dbReference type="PANTHER" id="PTHR33453:SF34">
    <property type="entry name" value="RIBOSOME-INACTIVATING PROTEIN"/>
    <property type="match status" value="1"/>
</dbReference>
<dbReference type="Pfam" id="PF00161">
    <property type="entry name" value="RIP"/>
    <property type="match status" value="1"/>
</dbReference>
<dbReference type="PRINTS" id="PR00396">
    <property type="entry name" value="SHIGARICIN"/>
</dbReference>
<dbReference type="SUPFAM" id="SSF56371">
    <property type="entry name" value="Ribosome inactivating proteins (RIP)"/>
    <property type="match status" value="1"/>
</dbReference>
<dbReference type="PROSITE" id="PS00275">
    <property type="entry name" value="SHIGA_RICIN"/>
    <property type="match status" value="1"/>
</dbReference>
<name>RIP2_MOMBA</name>